<comment type="function">
    <text evidence="3 10">Dehydrogenase; part of the gene cluster that mediates the biosynthesis of strobilurin A, an antifungal polyketide that contains a key beta-methoxyacrylate toxophore that targets the complex III of the mitochondrial electron transport chain (PubMed:30258052). Strobilurin biosynthesis begins with construction of benzoyl CoA by step-wise elimination of ammonia from phenylalanine by the phenylalanine ammonia-lyase str11, oxygenation by str8 and retro-Claisen reaction to form benzoic acid, which is activated to its CoA thiolester benzoyl CoA by the dedicated CoA ligase str10 (PubMed:30258052). Benzoyl CoA forms the starter unit for the highly reducing polyketide synthase stpks1 that produces the polyketide prestrobilutin A (PubMed:30258052). The FAD-dependent oxygenase str9 then catalyzes the key oxidative rearrangement responsible for the creation of the beta-methoxyacrylate toxophore (PubMed:30258052). Str9 performs epoxidation of the 2,3 olefin of prestrobilutin A, followed by Meinwald rearrangement to furnish the aldehyde intermediate (Probable). Rapid enolization of the aldehyde intermediate would give the beta-methoxyacrylate skeleton and methylations catalyzed by str2 and str3 complete the synthesis and lead to the production of strobilurin A (Probable). The short-chain dehydrogenase stl2 and the dehydrogenase str4 play a role in the shunt pathway leading to the production of bolineol (PubMed:30258052). The cluster encodes no obvious halogenase gene that could be involved in production of strobilurin B, nor any obvious dimethylallyl-transferase that could be involved in the production of strobilurin G (Probable). It is possible that unknown proteins encoded in, or near, the cluster (such as str1 or stl1) may form new classes of halogenases or dimethylally-transferases, or that the responsible genes are located elsewhere on the genome (Probable). Similarly, proteins encoded by str5/str6 hydrolases appear to have no chemical role in the biosynthesis of strobilurin A (Probable). Finally, no obvious self-resistance gene is found within the cluster (Probable).</text>
</comment>
<comment type="cofactor">
    <cofactor evidence="1">
        <name>FAD</name>
        <dbReference type="ChEBI" id="CHEBI:57692"/>
    </cofactor>
</comment>
<comment type="pathway">
    <text evidence="3">Mycotoxin biosynthesis.</text>
</comment>
<comment type="subunit">
    <text evidence="2">Homodimer.</text>
</comment>
<comment type="induction">
    <text evidence="3">Induced in strobilurin-producing conditions (on CGC medium after 6 days of growth).</text>
</comment>
<comment type="biotechnology">
    <text evidence="4 5 6 7 8">The structure of strobilurin A was used for the development of the major class of beta-methoxyacrylate agricultural fungicides since its beta-methoxyacrylate toxophore targets the Qo site of complex III of the mitochondrial electron transport chain and prevents adenosine triphosphate synthesis (PubMed:563391, PubMed:6271595). Compounds such as azoxystrobin (Syngenta) and Kresoxim methyl (BASF) are among the most widely used fungicides worldwide (PubMed:12146165, PubMed:29711574). This class of antifungals are used as effective treatments against a broad range of destructive fungal plant pathogens and make significant contributions to food security (PubMed:12146165, PubMed:29711574). The strobilurin fungicides are estimated to have been worth 3.4 billion dollars in 2015 and they make up 25% of the fungicide market and 6.7% of the total crop protection market (PubMed:30258052).</text>
</comment>
<comment type="similarity">
    <text evidence="9">Belongs to the GMC oxidoreductase family.</text>
</comment>
<keyword id="KW-0274">FAD</keyword>
<keyword id="KW-0285">Flavoprotein</keyword>
<keyword id="KW-0560">Oxidoreductase</keyword>
<organism>
    <name type="scientific">Strobilurus tenacellus</name>
    <dbReference type="NCBI Taxonomy" id="41251"/>
    <lineage>
        <taxon>Eukaryota</taxon>
        <taxon>Fungi</taxon>
        <taxon>Dikarya</taxon>
        <taxon>Basidiomycota</taxon>
        <taxon>Agaricomycotina</taxon>
        <taxon>Agaricomycetes</taxon>
        <taxon>Agaricomycetidae</taxon>
        <taxon>Agaricales</taxon>
        <taxon>Marasmiineae</taxon>
        <taxon>Physalacriaceae</taxon>
        <taxon>Strobilurus</taxon>
    </lineage>
</organism>
<evidence type="ECO:0000250" key="1">
    <source>
        <dbReference type="UniProtKB" id="E4QP00"/>
    </source>
</evidence>
<evidence type="ECO:0000250" key="2">
    <source>
        <dbReference type="UniProtKB" id="Q12062"/>
    </source>
</evidence>
<evidence type="ECO:0000269" key="3">
    <source>
    </source>
</evidence>
<evidence type="ECO:0000269" key="4">
    <source>
    </source>
</evidence>
<evidence type="ECO:0000269" key="5">
    <source>
    </source>
</evidence>
<evidence type="ECO:0000303" key="6">
    <source>
    </source>
</evidence>
<evidence type="ECO:0000303" key="7">
    <source>
    </source>
</evidence>
<evidence type="ECO:0000303" key="8">
    <source>
    </source>
</evidence>
<evidence type="ECO:0000305" key="9"/>
<evidence type="ECO:0000305" key="10">
    <source>
    </source>
</evidence>
<sequence length="615" mass="66352">MGASHSTVSDPHRFAVAITGSDDDVRSLQAHPTKSYDYIVVGGGTAGCVLASRLSEDSRVNVLLVEAGYSNHGVTNSIIPLAFPMLMKSKYDWNYETVGMAGINGRTSYWPRGRLLGGTSSINGSMYHRCAPEDFSAWVEEGAKGWEYENMKPYFRKAEGYNPHPDHPNIDPALHGTVGPAKVTHGPIAFLSQPITKDILQSSINVGIRQVHDFNTDVGPTGVGLFARNVFPNGTRVSAATGYLTPSVLARPNLTVAVECMAEKIVLSSDEKVPRAKGLIFSTSRDGQRFYVPASKELILSSGVIGTPQVLMLSGIGPAAELAKHNIPVVRDLPVGEYLQDHFSPGPMLIRAKKGTWDFILRPLGGLLAMVKWFFFGKGPLSSLSVQVACFVRSDDKTFAHPQLPMHDGAKKYQVKDCCSGPTAPDIELFFAPFLAPPLGMKYWPFPGLTSGMLLLKPASYGTVKLASRNAWDYPLIDPNYLSHESDIALSIMGMRLLARIARTKPFADSLDLPEDSDDKTSVFWPTDCNPDTVSDDDLEAWARLHGQSTGHPTSSARMGGSPSTSVVDSKLKVHGVEGLRVCDASCFPTQVSGHPAAVVVAVAERAADLIKGVA</sequence>
<accession>A0A3B1EFP9</accession>
<name>STR4_STRTC</name>
<feature type="chain" id="PRO_0000449341" description="Dehydrogenase str4">
    <location>
        <begin position="1"/>
        <end position="615"/>
    </location>
</feature>
<feature type="active site" description="Proton acceptor" evidence="1">
    <location>
        <position position="552"/>
    </location>
</feature>
<feature type="binding site" evidence="1">
    <location>
        <begin position="45"/>
        <end position="46"/>
    </location>
    <ligand>
        <name>FAD</name>
        <dbReference type="ChEBI" id="CHEBI:57692"/>
    </ligand>
</feature>
<feature type="binding site" evidence="1">
    <location>
        <begin position="66"/>
        <end position="67"/>
    </location>
    <ligand>
        <name>FAD</name>
        <dbReference type="ChEBI" id="CHEBI:57692"/>
    </ligand>
</feature>
<feature type="binding site" evidence="1">
    <location>
        <begin position="123"/>
        <end position="126"/>
    </location>
    <ligand>
        <name>FAD</name>
        <dbReference type="ChEBI" id="CHEBI:57692"/>
    </ligand>
</feature>
<feature type="binding site" evidence="1">
    <location>
        <position position="585"/>
    </location>
    <ligand>
        <name>FAD</name>
        <dbReference type="ChEBI" id="CHEBI:57692"/>
    </ligand>
</feature>
<feature type="binding site" evidence="1">
    <location>
        <begin position="596"/>
        <end position="597"/>
    </location>
    <ligand>
        <name>FAD</name>
        <dbReference type="ChEBI" id="CHEBI:57692"/>
    </ligand>
</feature>
<dbReference type="EC" id="1.1.-.-" evidence="10"/>
<dbReference type="EMBL" id="KY070339">
    <property type="protein sequence ID" value="ATV82114.1"/>
    <property type="molecule type" value="Genomic_DNA"/>
</dbReference>
<dbReference type="SMR" id="A0A3B1EFP9"/>
<dbReference type="GO" id="GO:0050660">
    <property type="term" value="F:flavin adenine dinucleotide binding"/>
    <property type="evidence" value="ECO:0007669"/>
    <property type="project" value="InterPro"/>
</dbReference>
<dbReference type="GO" id="GO:0016614">
    <property type="term" value="F:oxidoreductase activity, acting on CH-OH group of donors"/>
    <property type="evidence" value="ECO:0007669"/>
    <property type="project" value="InterPro"/>
</dbReference>
<dbReference type="Gene3D" id="3.50.50.60">
    <property type="entry name" value="FAD/NAD(P)-binding domain"/>
    <property type="match status" value="1"/>
</dbReference>
<dbReference type="Gene3D" id="3.30.560.10">
    <property type="entry name" value="Glucose Oxidase, domain 3"/>
    <property type="match status" value="1"/>
</dbReference>
<dbReference type="InterPro" id="IPR036188">
    <property type="entry name" value="FAD/NAD-bd_sf"/>
</dbReference>
<dbReference type="InterPro" id="IPR012132">
    <property type="entry name" value="GMC_OxRdtase"/>
</dbReference>
<dbReference type="InterPro" id="IPR000172">
    <property type="entry name" value="GMC_OxRdtase_N"/>
</dbReference>
<dbReference type="InterPro" id="IPR007867">
    <property type="entry name" value="GMC_OxRtase_C"/>
</dbReference>
<dbReference type="PANTHER" id="PTHR11552:SF147">
    <property type="entry name" value="CHOLINE DEHYDROGENASE, MITOCHONDRIAL"/>
    <property type="match status" value="1"/>
</dbReference>
<dbReference type="PANTHER" id="PTHR11552">
    <property type="entry name" value="GLUCOSE-METHANOL-CHOLINE GMC OXIDOREDUCTASE"/>
    <property type="match status" value="1"/>
</dbReference>
<dbReference type="Pfam" id="PF05199">
    <property type="entry name" value="GMC_oxred_C"/>
    <property type="match status" value="1"/>
</dbReference>
<dbReference type="Pfam" id="PF00732">
    <property type="entry name" value="GMC_oxred_N"/>
    <property type="match status" value="1"/>
</dbReference>
<dbReference type="PIRSF" id="PIRSF000137">
    <property type="entry name" value="Alcohol_oxidase"/>
    <property type="match status" value="1"/>
</dbReference>
<dbReference type="SUPFAM" id="SSF54373">
    <property type="entry name" value="FAD-linked reductases, C-terminal domain"/>
    <property type="match status" value="1"/>
</dbReference>
<dbReference type="SUPFAM" id="SSF51905">
    <property type="entry name" value="FAD/NAD(P)-binding domain"/>
    <property type="match status" value="1"/>
</dbReference>
<gene>
    <name evidence="8" type="primary">str4</name>
</gene>
<reference key="1">
    <citation type="journal article" date="2018" name="Nat. Commun.">
        <title>Strobilurin biosynthesis in Basidiomycete fungi.</title>
        <authorList>
            <person name="Nofiani R."/>
            <person name="de Mattos-Shipley K."/>
            <person name="Lebe K.E."/>
            <person name="Han L.C."/>
            <person name="Iqbal Z."/>
            <person name="Bailey A.M."/>
            <person name="Willis C.L."/>
            <person name="Simpson T.J."/>
            <person name="Cox R.J."/>
        </authorList>
    </citation>
    <scope>NUCLEOTIDE SEQUENCE [GENOMIC DNA]</scope>
    <scope>INDUCTION</scope>
    <scope>FUNCTION</scope>
    <scope>BIOTECHNOLOGY</scope>
    <source>
        <strain>CBS 621.79</strain>
    </source>
</reference>
<reference key="2">
    <citation type="journal article" date="1977" name="J. Antibiot.">
        <title>The strobilurins--new antifungal antibiotics from the basidiomycete Strobilurus tenacellus.</title>
        <authorList>
            <person name="Anke T."/>
            <person name="Oberwinkler F."/>
            <person name="Steglich W."/>
            <person name="Schramm G."/>
        </authorList>
    </citation>
    <scope>BIOTECHNOLOGY</scope>
</reference>
<reference key="3">
    <citation type="journal article" date="1981" name="FEBS Lett.">
        <title>Oudemansin, strobilurin A, strobilurin B and myxothiazol: new inhibitors of the bc1 segment of the respiratory chain with an E-beta-methoxyacrylate system as common structural element.</title>
        <authorList>
            <person name="Becker W.F."/>
            <person name="von Jagow G."/>
            <person name="Anke T."/>
            <person name="Steglich W."/>
        </authorList>
    </citation>
    <scope>BIOTECHNOLOGY</scope>
</reference>
<reference key="4">
    <citation type="journal article" date="1999" name="Angew. Chem. Int. Ed.">
        <title>Strobilurins: evolution of a new class of active substances.</title>
        <authorList>
            <person name="Sauter H."/>
            <person name="Steglich W."/>
            <person name="Anke T."/>
        </authorList>
    </citation>
    <scope>REVIEW ON BIOTECHNOLOGY</scope>
</reference>
<reference key="5">
    <citation type="journal article" date="2002" name="Pest Manag. Sci.">
        <title>The strobilurin fungicides.</title>
        <authorList>
            <person name="Bartlett D.W."/>
            <person name="Clough J.M."/>
            <person name="Godwin J.R."/>
            <person name="Hall A.A."/>
            <person name="Hamer M."/>
            <person name="Parr-Dobrzanski B."/>
        </authorList>
    </citation>
    <scope>REVIEW ON BIOTECHNOLOGY</scope>
</reference>
<protein>
    <recommendedName>
        <fullName evidence="8">Dehydrogenase str4</fullName>
        <ecNumber evidence="10">1.1.-.-</ecNumber>
    </recommendedName>
    <alternativeName>
        <fullName evidence="8">Strobilurin A biosynthesis cluster protein r4</fullName>
    </alternativeName>
</protein>
<proteinExistence type="evidence at protein level"/>